<comment type="catalytic activity">
    <reaction evidence="1">
        <text>tRNA(Arg) + L-arginine + ATP = L-arginyl-tRNA(Arg) + AMP + diphosphate</text>
        <dbReference type="Rhea" id="RHEA:20301"/>
        <dbReference type="Rhea" id="RHEA-COMP:9658"/>
        <dbReference type="Rhea" id="RHEA-COMP:9673"/>
        <dbReference type="ChEBI" id="CHEBI:30616"/>
        <dbReference type="ChEBI" id="CHEBI:32682"/>
        <dbReference type="ChEBI" id="CHEBI:33019"/>
        <dbReference type="ChEBI" id="CHEBI:78442"/>
        <dbReference type="ChEBI" id="CHEBI:78513"/>
        <dbReference type="ChEBI" id="CHEBI:456215"/>
        <dbReference type="EC" id="6.1.1.19"/>
    </reaction>
</comment>
<comment type="subunit">
    <text evidence="1">Monomer.</text>
</comment>
<comment type="subcellular location">
    <subcellularLocation>
        <location evidence="1">Cytoplasm</location>
    </subcellularLocation>
</comment>
<comment type="similarity">
    <text evidence="1">Belongs to the class-I aminoacyl-tRNA synthetase family.</text>
</comment>
<sequence>MNIQALLSEKVRQAMIAAGAPADCEPQIRQSAKVQFGDYQANGMMAVAKKLGMAPRQLAEQVLTHLDLNGIASKVEIAGPGFINIFLDPAFLAEHVQQALASDRLGVATPEKQTIVVDYSAPNVAKEMHVGHLRSTIIGDTAVRTLEFLGHKVIRANHVGDWGTQFGMLIAWLEKQQQENAGEMELADLEGFYRDAKKHYDEDEEFAERARNYVVKLQSGDEYFREMWRKLVDITMTQNQITYDRLNVTLTRDDVMGESLYNPMLPGIVADLKAKGLAVESEGATVVFLDVFKNKEGEPMGVIIQKKDGGYLYTTTDIACAKYRYETLHADRVLYYIDSRQHQHLMQAWAIVRKAGYVPESVPLEHHMFGMMLGKDGKPFKTRAGGTVKLADLLDEALERARRLVAEKNPDMPADELEKLANAVGIGAVKYADLSKNRTTDYIFDWDNMLAFEGNTAPYMQYAYTRVLSVFRKAEINEEQLAAAPVIIREDREAQLAARLLQFEETLTVVAREGTPHVMCAYLYDLAGLFSGFYEHCPILSAENEEVRNSRLKLAQLTAKTLKLGLDTLGIETVERM</sequence>
<feature type="chain" id="PRO_0000151604" description="Arginine--tRNA ligase">
    <location>
        <begin position="1"/>
        <end position="577"/>
    </location>
</feature>
<feature type="short sequence motif" description="'HIGH' region">
    <location>
        <begin position="122"/>
        <end position="132"/>
    </location>
</feature>
<protein>
    <recommendedName>
        <fullName evidence="1">Arginine--tRNA ligase</fullName>
        <ecNumber evidence="1">6.1.1.19</ecNumber>
    </recommendedName>
    <alternativeName>
        <fullName evidence="1">Arginyl-tRNA synthetase</fullName>
        <shortName evidence="1">ArgRS</shortName>
    </alternativeName>
</protein>
<reference key="1">
    <citation type="journal article" date="2002" name="Nucleic Acids Res.">
        <title>Genome sequence of Shigella flexneri 2a: insights into pathogenicity through comparison with genomes of Escherichia coli K12 and O157.</title>
        <authorList>
            <person name="Jin Q."/>
            <person name="Yuan Z."/>
            <person name="Xu J."/>
            <person name="Wang Y."/>
            <person name="Shen Y."/>
            <person name="Lu W."/>
            <person name="Wang J."/>
            <person name="Liu H."/>
            <person name="Yang J."/>
            <person name="Yang F."/>
            <person name="Zhang X."/>
            <person name="Zhang J."/>
            <person name="Yang G."/>
            <person name="Wu H."/>
            <person name="Qu D."/>
            <person name="Dong J."/>
            <person name="Sun L."/>
            <person name="Xue Y."/>
            <person name="Zhao A."/>
            <person name="Gao Y."/>
            <person name="Zhu J."/>
            <person name="Kan B."/>
            <person name="Ding K."/>
            <person name="Chen S."/>
            <person name="Cheng H."/>
            <person name="Yao Z."/>
            <person name="He B."/>
            <person name="Chen R."/>
            <person name="Ma D."/>
            <person name="Qiang B."/>
            <person name="Wen Y."/>
            <person name="Hou Y."/>
            <person name="Yu J."/>
        </authorList>
    </citation>
    <scope>NUCLEOTIDE SEQUENCE [LARGE SCALE GENOMIC DNA]</scope>
    <source>
        <strain>301 / Serotype 2a</strain>
    </source>
</reference>
<reference key="2">
    <citation type="journal article" date="2003" name="Infect. Immun.">
        <title>Complete genome sequence and comparative genomics of Shigella flexneri serotype 2a strain 2457T.</title>
        <authorList>
            <person name="Wei J."/>
            <person name="Goldberg M.B."/>
            <person name="Burland V."/>
            <person name="Venkatesan M.M."/>
            <person name="Deng W."/>
            <person name="Fournier G."/>
            <person name="Mayhew G.F."/>
            <person name="Plunkett G. III"/>
            <person name="Rose D.J."/>
            <person name="Darling A."/>
            <person name="Mau B."/>
            <person name="Perna N.T."/>
            <person name="Payne S.M."/>
            <person name="Runyen-Janecky L.J."/>
            <person name="Zhou S."/>
            <person name="Schwartz D.C."/>
            <person name="Blattner F.R."/>
        </authorList>
    </citation>
    <scope>NUCLEOTIDE SEQUENCE [LARGE SCALE GENOMIC DNA]</scope>
    <source>
        <strain>ATCC 700930 / 2457T / Serotype 2a</strain>
    </source>
</reference>
<evidence type="ECO:0000255" key="1">
    <source>
        <dbReference type="HAMAP-Rule" id="MF_00123"/>
    </source>
</evidence>
<accession>Q83KQ3</accession>
<keyword id="KW-0030">Aminoacyl-tRNA synthetase</keyword>
<keyword id="KW-0067">ATP-binding</keyword>
<keyword id="KW-0963">Cytoplasm</keyword>
<keyword id="KW-0436">Ligase</keyword>
<keyword id="KW-0547">Nucleotide-binding</keyword>
<keyword id="KW-0648">Protein biosynthesis</keyword>
<keyword id="KW-1185">Reference proteome</keyword>
<dbReference type="EC" id="6.1.1.19" evidence="1"/>
<dbReference type="EMBL" id="AE005674">
    <property type="protein sequence ID" value="AAN43471.1"/>
    <property type="molecule type" value="Genomic_DNA"/>
</dbReference>
<dbReference type="EMBL" id="AE014073">
    <property type="protein sequence ID" value="AAP17304.1"/>
    <property type="molecule type" value="Genomic_DNA"/>
</dbReference>
<dbReference type="RefSeq" id="NP_707764.1">
    <property type="nucleotide sequence ID" value="NC_004337.2"/>
</dbReference>
<dbReference type="RefSeq" id="WP_001025297.1">
    <property type="nucleotide sequence ID" value="NZ_WPGW01000115.1"/>
</dbReference>
<dbReference type="SMR" id="Q83KQ3"/>
<dbReference type="STRING" id="198214.SF1917"/>
<dbReference type="PaxDb" id="198214-SF1917"/>
<dbReference type="GeneID" id="1025108"/>
<dbReference type="KEGG" id="sfl:SF1917"/>
<dbReference type="KEGG" id="sfx:S2007"/>
<dbReference type="PATRIC" id="fig|198214.7.peg.2288"/>
<dbReference type="HOGENOM" id="CLU_006406_5_1_6"/>
<dbReference type="Proteomes" id="UP000001006">
    <property type="component" value="Chromosome"/>
</dbReference>
<dbReference type="Proteomes" id="UP000002673">
    <property type="component" value="Chromosome"/>
</dbReference>
<dbReference type="GO" id="GO:0005737">
    <property type="term" value="C:cytoplasm"/>
    <property type="evidence" value="ECO:0007669"/>
    <property type="project" value="UniProtKB-SubCell"/>
</dbReference>
<dbReference type="GO" id="GO:0004814">
    <property type="term" value="F:arginine-tRNA ligase activity"/>
    <property type="evidence" value="ECO:0007669"/>
    <property type="project" value="UniProtKB-UniRule"/>
</dbReference>
<dbReference type="GO" id="GO:0005524">
    <property type="term" value="F:ATP binding"/>
    <property type="evidence" value="ECO:0007669"/>
    <property type="project" value="UniProtKB-UniRule"/>
</dbReference>
<dbReference type="GO" id="GO:0006420">
    <property type="term" value="P:arginyl-tRNA aminoacylation"/>
    <property type="evidence" value="ECO:0007669"/>
    <property type="project" value="UniProtKB-UniRule"/>
</dbReference>
<dbReference type="CDD" id="cd07956">
    <property type="entry name" value="Anticodon_Ia_Arg"/>
    <property type="match status" value="1"/>
</dbReference>
<dbReference type="CDD" id="cd00671">
    <property type="entry name" value="ArgRS_core"/>
    <property type="match status" value="1"/>
</dbReference>
<dbReference type="FunFam" id="1.10.730.10:FF:000001">
    <property type="entry name" value="Arginine--tRNA ligase"/>
    <property type="match status" value="1"/>
</dbReference>
<dbReference type="FunFam" id="3.30.1360.70:FF:000001">
    <property type="entry name" value="Arginine--tRNA ligase"/>
    <property type="match status" value="1"/>
</dbReference>
<dbReference type="FunFam" id="3.40.50.620:FF:000030">
    <property type="entry name" value="Arginine--tRNA ligase"/>
    <property type="match status" value="1"/>
</dbReference>
<dbReference type="Gene3D" id="3.30.1360.70">
    <property type="entry name" value="Arginyl tRNA synthetase N-terminal domain"/>
    <property type="match status" value="1"/>
</dbReference>
<dbReference type="Gene3D" id="3.40.50.620">
    <property type="entry name" value="HUPs"/>
    <property type="match status" value="1"/>
</dbReference>
<dbReference type="Gene3D" id="1.10.730.10">
    <property type="entry name" value="Isoleucyl-tRNA Synthetase, Domain 1"/>
    <property type="match status" value="1"/>
</dbReference>
<dbReference type="HAMAP" id="MF_00123">
    <property type="entry name" value="Arg_tRNA_synth"/>
    <property type="match status" value="1"/>
</dbReference>
<dbReference type="InterPro" id="IPR001412">
    <property type="entry name" value="aa-tRNA-synth_I_CS"/>
</dbReference>
<dbReference type="InterPro" id="IPR001278">
    <property type="entry name" value="Arg-tRNA-ligase"/>
</dbReference>
<dbReference type="InterPro" id="IPR005148">
    <property type="entry name" value="Arg-tRNA-synth_N"/>
</dbReference>
<dbReference type="InterPro" id="IPR036695">
    <property type="entry name" value="Arg-tRNA-synth_N_sf"/>
</dbReference>
<dbReference type="InterPro" id="IPR035684">
    <property type="entry name" value="ArgRS_core"/>
</dbReference>
<dbReference type="InterPro" id="IPR008909">
    <property type="entry name" value="DALR_anticod-bd"/>
</dbReference>
<dbReference type="InterPro" id="IPR014729">
    <property type="entry name" value="Rossmann-like_a/b/a_fold"/>
</dbReference>
<dbReference type="InterPro" id="IPR009080">
    <property type="entry name" value="tRNAsynth_Ia_anticodon-bd"/>
</dbReference>
<dbReference type="NCBIfam" id="TIGR00456">
    <property type="entry name" value="argS"/>
    <property type="match status" value="1"/>
</dbReference>
<dbReference type="PANTHER" id="PTHR11956:SF5">
    <property type="entry name" value="ARGININE--TRNA LIGASE, CYTOPLASMIC"/>
    <property type="match status" value="1"/>
</dbReference>
<dbReference type="PANTHER" id="PTHR11956">
    <property type="entry name" value="ARGINYL-TRNA SYNTHETASE"/>
    <property type="match status" value="1"/>
</dbReference>
<dbReference type="Pfam" id="PF03485">
    <property type="entry name" value="Arg_tRNA_synt_N"/>
    <property type="match status" value="1"/>
</dbReference>
<dbReference type="Pfam" id="PF05746">
    <property type="entry name" value="DALR_1"/>
    <property type="match status" value="1"/>
</dbReference>
<dbReference type="Pfam" id="PF00750">
    <property type="entry name" value="tRNA-synt_1d"/>
    <property type="match status" value="1"/>
</dbReference>
<dbReference type="PRINTS" id="PR01038">
    <property type="entry name" value="TRNASYNTHARG"/>
</dbReference>
<dbReference type="SMART" id="SM01016">
    <property type="entry name" value="Arg_tRNA_synt_N"/>
    <property type="match status" value="1"/>
</dbReference>
<dbReference type="SMART" id="SM00836">
    <property type="entry name" value="DALR_1"/>
    <property type="match status" value="1"/>
</dbReference>
<dbReference type="SUPFAM" id="SSF47323">
    <property type="entry name" value="Anticodon-binding domain of a subclass of class I aminoacyl-tRNA synthetases"/>
    <property type="match status" value="1"/>
</dbReference>
<dbReference type="SUPFAM" id="SSF55190">
    <property type="entry name" value="Arginyl-tRNA synthetase (ArgRS), N-terminal 'additional' domain"/>
    <property type="match status" value="1"/>
</dbReference>
<dbReference type="SUPFAM" id="SSF52374">
    <property type="entry name" value="Nucleotidylyl transferase"/>
    <property type="match status" value="1"/>
</dbReference>
<dbReference type="PROSITE" id="PS00178">
    <property type="entry name" value="AA_TRNA_LIGASE_I"/>
    <property type="match status" value="1"/>
</dbReference>
<proteinExistence type="inferred from homology"/>
<organism>
    <name type="scientific">Shigella flexneri</name>
    <dbReference type="NCBI Taxonomy" id="623"/>
    <lineage>
        <taxon>Bacteria</taxon>
        <taxon>Pseudomonadati</taxon>
        <taxon>Pseudomonadota</taxon>
        <taxon>Gammaproteobacteria</taxon>
        <taxon>Enterobacterales</taxon>
        <taxon>Enterobacteriaceae</taxon>
        <taxon>Shigella</taxon>
    </lineage>
</organism>
<gene>
    <name evidence="1" type="primary">argS</name>
    <name type="ordered locus">SF1917</name>
    <name type="ordered locus">S2007</name>
</gene>
<name>SYR_SHIFL</name>